<evidence type="ECO:0000250" key="1"/>
<evidence type="ECO:0000250" key="2">
    <source>
        <dbReference type="UniProtKB" id="P02776"/>
    </source>
</evidence>
<evidence type="ECO:0000305" key="3"/>
<comment type="function">
    <text evidence="2">Chemokine released during platelet aggregation that plays a role in different biological processes including hematopoiesis, cell proliferation, differentiation, and activation. Acts via different functional receptors including CCR1, CXCR3A or CXCR3B. Upon interaction with CXCR3A receptor, induces activated T-lymphocytes migration mediated via downstream Ras/extracellular signal-regulated kinase (ERK) signaling. Neutralizes the anticoagulant effect of heparin by binding more strongly to heparin than to the chondroitin-4-sulfate chains of the carrier molecule. Plays a role in the inhibition of hematopoiesis and in the maintenance of hematopoietic stem cell (HSC) quiescence. Chemotactic for neutrophils and monocytes via CCR1. Inhibits endothelial cell proliferation. In cooperation with toll-like receptor 8/TLR8, induces chromatin remodeling and activates inflammatory gene expression via the TBK1-IRF5 axis. In addition, induces myofibroblast differentiation and collagen synthesis in different precursor cells, including endothelial cells, by stimulating endothelial-to-mesenchymal transition.</text>
</comment>
<comment type="subunit">
    <text evidence="2">Homotetramer. Interacts with TNFAIP6 (via Link domain). Interacts with CCR1. Interacts with CXCR3.</text>
</comment>
<comment type="subcellular location">
    <subcellularLocation>
        <location>Secreted</location>
    </subcellularLocation>
</comment>
<comment type="PTM">
    <text evidence="1">Binds non-covalently to a proteoglycan molecule.</text>
</comment>
<comment type="similarity">
    <text evidence="3">Belongs to the intercrine alpha (chemokine CxC) family.</text>
</comment>
<name>PLF4_RABIT</name>
<sequence length="30" mass="3318">SDDPKESEGDLHCVCVKTTRLVRPGHITXL</sequence>
<accession>P83470</accession>
<reference key="1">
    <citation type="submission" date="2002-10" db="UniProtKB">
        <title>Platelet activation induced by Bothrops jararaca snake envenomation in rabbits.</title>
        <authorList>
            <person name="Santoro M.L."/>
            <person name="Barbaro K.C."/>
            <person name="Rocha T.R.F."/>
            <person name="Torquato R.J.S."/>
            <person name="Hirata I.Y."/>
            <person name="Sano-Martins I.S."/>
        </authorList>
    </citation>
    <scope>PROTEIN SEQUENCE</scope>
    <source>
        <strain>New Zealand</strain>
        <tissue>Platelet</tissue>
    </source>
</reference>
<protein>
    <recommendedName>
        <fullName>Platelet factor 4</fullName>
        <shortName>PF-4</shortName>
    </recommendedName>
    <alternativeName>
        <fullName>C-X-C motif chemokine 4</fullName>
    </alternativeName>
</protein>
<gene>
    <name type="primary">PF4</name>
    <name type="synonym">CXCL4</name>
    <name type="synonym">SCYB4</name>
</gene>
<proteinExistence type="evidence at protein level"/>
<keyword id="KW-0145">Chemotaxis</keyword>
<keyword id="KW-0202">Cytokine</keyword>
<keyword id="KW-0903">Direct protein sequencing</keyword>
<keyword id="KW-0358">Heparin-binding</keyword>
<keyword id="KW-1185">Reference proteome</keyword>
<keyword id="KW-0964">Secreted</keyword>
<organism>
    <name type="scientific">Oryctolagus cuniculus</name>
    <name type="common">Rabbit</name>
    <dbReference type="NCBI Taxonomy" id="9986"/>
    <lineage>
        <taxon>Eukaryota</taxon>
        <taxon>Metazoa</taxon>
        <taxon>Chordata</taxon>
        <taxon>Craniata</taxon>
        <taxon>Vertebrata</taxon>
        <taxon>Euteleostomi</taxon>
        <taxon>Mammalia</taxon>
        <taxon>Eutheria</taxon>
        <taxon>Euarchontoglires</taxon>
        <taxon>Glires</taxon>
        <taxon>Lagomorpha</taxon>
        <taxon>Leporidae</taxon>
        <taxon>Oryctolagus</taxon>
    </lineage>
</organism>
<dbReference type="STRING" id="9986.ENSOCUP00000041572"/>
<dbReference type="eggNOG" id="ENOG502TF57">
    <property type="taxonomic scope" value="Eukaryota"/>
</dbReference>
<dbReference type="InParanoid" id="P83470"/>
<dbReference type="Proteomes" id="UP000001811">
    <property type="component" value="Unplaced"/>
</dbReference>
<dbReference type="GO" id="GO:0005615">
    <property type="term" value="C:extracellular space"/>
    <property type="evidence" value="ECO:0007669"/>
    <property type="project" value="UniProtKB-KW"/>
</dbReference>
<dbReference type="GO" id="GO:0048248">
    <property type="term" value="F:CXCR3 chemokine receptor binding"/>
    <property type="evidence" value="ECO:0000250"/>
    <property type="project" value="UniProtKB"/>
</dbReference>
<dbReference type="GO" id="GO:0005125">
    <property type="term" value="F:cytokine activity"/>
    <property type="evidence" value="ECO:0007669"/>
    <property type="project" value="UniProtKB-KW"/>
</dbReference>
<dbReference type="GO" id="GO:0008201">
    <property type="term" value="F:heparin binding"/>
    <property type="evidence" value="ECO:0007669"/>
    <property type="project" value="UniProtKB-KW"/>
</dbReference>
<dbReference type="GO" id="GO:0007189">
    <property type="term" value="P:adenylate cyclase-activating G protein-coupled receptor signaling pathway"/>
    <property type="evidence" value="ECO:0000250"/>
    <property type="project" value="UniProtKB"/>
</dbReference>
<dbReference type="GO" id="GO:0006935">
    <property type="term" value="P:chemotaxis"/>
    <property type="evidence" value="ECO:0007669"/>
    <property type="project" value="UniProtKB-KW"/>
</dbReference>
<dbReference type="GO" id="GO:0045944">
    <property type="term" value="P:positive regulation of transcription by RNA polymerase II"/>
    <property type="evidence" value="ECO:0000250"/>
    <property type="project" value="UniProtKB"/>
</dbReference>
<dbReference type="GO" id="GO:0042127">
    <property type="term" value="P:regulation of cell population proliferation"/>
    <property type="evidence" value="ECO:0000250"/>
    <property type="project" value="UniProtKB"/>
</dbReference>
<feature type="chain" id="PRO_0000144300" description="Platelet factor 4">
    <location>
        <begin position="1"/>
        <end position="30" status="greater than"/>
    </location>
</feature>
<feature type="sequence variant">
    <original>R</original>
    <variation>S</variation>
    <location>
        <position position="20"/>
    </location>
</feature>
<feature type="sequence variant">
    <original>G</original>
    <variation>T</variation>
    <location>
        <position position="25"/>
    </location>
</feature>
<feature type="non-terminal residue">
    <location>
        <position position="30"/>
    </location>
</feature>